<protein>
    <recommendedName>
        <fullName evidence="1">1-deoxy-D-xylulose-5-phosphate synthase</fullName>
        <ecNumber evidence="1">2.2.1.7</ecNumber>
    </recommendedName>
    <alternativeName>
        <fullName evidence="1">1-deoxyxylulose-5-phosphate synthase</fullName>
        <shortName evidence="1">DXP synthase</shortName>
        <shortName evidence="1">DXPS</shortName>
    </alternativeName>
</protein>
<comment type="function">
    <text evidence="1">Catalyzes the acyloin condensation reaction between C atoms 2 and 3 of pyruvate and glyceraldehyde 3-phosphate to yield 1-deoxy-D-xylulose-5-phosphate (DXP).</text>
</comment>
<comment type="catalytic activity">
    <reaction evidence="1">
        <text>D-glyceraldehyde 3-phosphate + pyruvate + H(+) = 1-deoxy-D-xylulose 5-phosphate + CO2</text>
        <dbReference type="Rhea" id="RHEA:12605"/>
        <dbReference type="ChEBI" id="CHEBI:15361"/>
        <dbReference type="ChEBI" id="CHEBI:15378"/>
        <dbReference type="ChEBI" id="CHEBI:16526"/>
        <dbReference type="ChEBI" id="CHEBI:57792"/>
        <dbReference type="ChEBI" id="CHEBI:59776"/>
        <dbReference type="EC" id="2.2.1.7"/>
    </reaction>
</comment>
<comment type="cofactor">
    <cofactor evidence="1">
        <name>Mg(2+)</name>
        <dbReference type="ChEBI" id="CHEBI:18420"/>
    </cofactor>
    <text evidence="1">Binds 1 Mg(2+) ion per subunit.</text>
</comment>
<comment type="cofactor">
    <cofactor evidence="1">
        <name>thiamine diphosphate</name>
        <dbReference type="ChEBI" id="CHEBI:58937"/>
    </cofactor>
    <text evidence="1">Binds 1 thiamine pyrophosphate per subunit.</text>
</comment>
<comment type="pathway">
    <text evidence="1">Metabolic intermediate biosynthesis; 1-deoxy-D-xylulose 5-phosphate biosynthesis; 1-deoxy-D-xylulose 5-phosphate from D-glyceraldehyde 3-phosphate and pyruvate: step 1/1.</text>
</comment>
<comment type="subunit">
    <text evidence="1">Homodimer.</text>
</comment>
<comment type="similarity">
    <text evidence="1">Belongs to the transketolase family. DXPS subfamily.</text>
</comment>
<proteinExistence type="inferred from homology"/>
<sequence>MLLTTINDPQDLKKCTQPQLHTLASEIRQFLIETLSKTGGHLAPNLGVVELTLALHYVFDSPKDKLIWDVGHQAYVHKMLTGRREMFPTLRQYKGLCGFPKMVESPHDVWETGHSSTSLSAAMGMATARDLKKEKNHVVAVIGDGALTGGMALEALNHIGHERKNVIVVLNDNEMSIAPNVGALHNYLGKIRSTENYQWAKDEVEGLLKSIPAVGGKLAHMAERFKDSMKYLLVSGVLFEELGFTYIGPIDGHNMELLLDTLKTAKHTKGPVLIHAITKKGLGYAPAEADSVKWHGIGTYKIESGDTPKSAPTYTSVFADTMMKLADEDHSIVAVTPAMPAGSGLIPFGQKYPDRLFDVGIAEQHACTFAAGLATQGLKPVFAIYSTFLQRAYDQLIHDVARQKLHVIFAVDRAGLVGADGETHQGMYDVAFMRIIPNMVIMAPKDENELRHMMKTAVEYKGGPISYRYPRLPTRGVKMDEELQVLPIGKAEIVREGKHVAILSFGHVFEIAEAAVNQLQEEGIKPMLVNARFCKPLDEELLFRLAKEGYDIITVEEGSEMGGFGSAVIECYSRAGYHGMNVQIVAVPDYFVEHGSVKEQRQEVGLTADHIAARVRSLMPISKGVVEA</sequence>
<accession>C0ZC10</accession>
<feature type="chain" id="PRO_1000132922" description="1-deoxy-D-xylulose-5-phosphate synthase">
    <location>
        <begin position="1"/>
        <end position="628"/>
    </location>
</feature>
<feature type="binding site" evidence="1">
    <location>
        <position position="72"/>
    </location>
    <ligand>
        <name>thiamine diphosphate</name>
        <dbReference type="ChEBI" id="CHEBI:58937"/>
    </ligand>
</feature>
<feature type="binding site" evidence="1">
    <location>
        <begin position="113"/>
        <end position="115"/>
    </location>
    <ligand>
        <name>thiamine diphosphate</name>
        <dbReference type="ChEBI" id="CHEBI:58937"/>
    </ligand>
</feature>
<feature type="binding site" evidence="1">
    <location>
        <position position="144"/>
    </location>
    <ligand>
        <name>Mg(2+)</name>
        <dbReference type="ChEBI" id="CHEBI:18420"/>
    </ligand>
</feature>
<feature type="binding site" evidence="1">
    <location>
        <begin position="145"/>
        <end position="146"/>
    </location>
    <ligand>
        <name>thiamine diphosphate</name>
        <dbReference type="ChEBI" id="CHEBI:58937"/>
    </ligand>
</feature>
<feature type="binding site" evidence="1">
    <location>
        <position position="173"/>
    </location>
    <ligand>
        <name>Mg(2+)</name>
        <dbReference type="ChEBI" id="CHEBI:18420"/>
    </ligand>
</feature>
<feature type="binding site" evidence="1">
    <location>
        <position position="173"/>
    </location>
    <ligand>
        <name>thiamine diphosphate</name>
        <dbReference type="ChEBI" id="CHEBI:58937"/>
    </ligand>
</feature>
<feature type="binding site" evidence="1">
    <location>
        <position position="284"/>
    </location>
    <ligand>
        <name>thiamine diphosphate</name>
        <dbReference type="ChEBI" id="CHEBI:58937"/>
    </ligand>
</feature>
<feature type="binding site" evidence="1">
    <location>
        <position position="363"/>
    </location>
    <ligand>
        <name>thiamine diphosphate</name>
        <dbReference type="ChEBI" id="CHEBI:58937"/>
    </ligand>
</feature>
<name>DXS_BREBN</name>
<gene>
    <name evidence="1" type="primary">dxs</name>
    <name type="ordered locus">BBR47_23420</name>
</gene>
<organism>
    <name type="scientific">Brevibacillus brevis (strain 47 / JCM 6285 / NBRC 100599)</name>
    <dbReference type="NCBI Taxonomy" id="358681"/>
    <lineage>
        <taxon>Bacteria</taxon>
        <taxon>Bacillati</taxon>
        <taxon>Bacillota</taxon>
        <taxon>Bacilli</taxon>
        <taxon>Bacillales</taxon>
        <taxon>Paenibacillaceae</taxon>
        <taxon>Brevibacillus</taxon>
    </lineage>
</organism>
<keyword id="KW-0414">Isoprene biosynthesis</keyword>
<keyword id="KW-0460">Magnesium</keyword>
<keyword id="KW-0479">Metal-binding</keyword>
<keyword id="KW-1185">Reference proteome</keyword>
<keyword id="KW-0784">Thiamine biosynthesis</keyword>
<keyword id="KW-0786">Thiamine pyrophosphate</keyword>
<keyword id="KW-0808">Transferase</keyword>
<evidence type="ECO:0000255" key="1">
    <source>
        <dbReference type="HAMAP-Rule" id="MF_00315"/>
    </source>
</evidence>
<reference key="1">
    <citation type="submission" date="2005-03" db="EMBL/GenBank/DDBJ databases">
        <title>Brevibacillus brevis strain 47, complete genome.</title>
        <authorList>
            <person name="Hosoyama A."/>
            <person name="Yamada R."/>
            <person name="Hongo Y."/>
            <person name="Terui Y."/>
            <person name="Ankai A."/>
            <person name="Masuyama W."/>
            <person name="Sekiguchi M."/>
            <person name="Takeda T."/>
            <person name="Asano K."/>
            <person name="Ohji S."/>
            <person name="Ichikawa N."/>
            <person name="Narita S."/>
            <person name="Aoki N."/>
            <person name="Miura H."/>
            <person name="Matsushita S."/>
            <person name="Sekigawa T."/>
            <person name="Yamagata H."/>
            <person name="Yoshikawa H."/>
            <person name="Udaka S."/>
            <person name="Tanikawa S."/>
            <person name="Fujita N."/>
        </authorList>
    </citation>
    <scope>NUCLEOTIDE SEQUENCE [LARGE SCALE GENOMIC DNA]</scope>
    <source>
        <strain>47 / JCM 6285 / NBRC 100599</strain>
    </source>
</reference>
<dbReference type="EC" id="2.2.1.7" evidence="1"/>
<dbReference type="EMBL" id="AP008955">
    <property type="protein sequence ID" value="BAH43319.1"/>
    <property type="molecule type" value="Genomic_DNA"/>
</dbReference>
<dbReference type="RefSeq" id="WP_012686037.1">
    <property type="nucleotide sequence ID" value="NC_012491.1"/>
</dbReference>
<dbReference type="SMR" id="C0ZC10"/>
<dbReference type="STRING" id="358681.BBR47_23420"/>
<dbReference type="KEGG" id="bbe:BBR47_23420"/>
<dbReference type="eggNOG" id="COG1154">
    <property type="taxonomic scope" value="Bacteria"/>
</dbReference>
<dbReference type="HOGENOM" id="CLU_009227_1_4_9"/>
<dbReference type="UniPathway" id="UPA00064">
    <property type="reaction ID" value="UER00091"/>
</dbReference>
<dbReference type="Proteomes" id="UP000001877">
    <property type="component" value="Chromosome"/>
</dbReference>
<dbReference type="GO" id="GO:0005829">
    <property type="term" value="C:cytosol"/>
    <property type="evidence" value="ECO:0007669"/>
    <property type="project" value="TreeGrafter"/>
</dbReference>
<dbReference type="GO" id="GO:0008661">
    <property type="term" value="F:1-deoxy-D-xylulose-5-phosphate synthase activity"/>
    <property type="evidence" value="ECO:0007669"/>
    <property type="project" value="UniProtKB-UniRule"/>
</dbReference>
<dbReference type="GO" id="GO:0000287">
    <property type="term" value="F:magnesium ion binding"/>
    <property type="evidence" value="ECO:0007669"/>
    <property type="project" value="UniProtKB-UniRule"/>
</dbReference>
<dbReference type="GO" id="GO:0030976">
    <property type="term" value="F:thiamine pyrophosphate binding"/>
    <property type="evidence" value="ECO:0007669"/>
    <property type="project" value="UniProtKB-UniRule"/>
</dbReference>
<dbReference type="GO" id="GO:0052865">
    <property type="term" value="P:1-deoxy-D-xylulose 5-phosphate biosynthetic process"/>
    <property type="evidence" value="ECO:0007669"/>
    <property type="project" value="UniProtKB-UniPathway"/>
</dbReference>
<dbReference type="GO" id="GO:0019288">
    <property type="term" value="P:isopentenyl diphosphate biosynthetic process, methylerythritol 4-phosphate pathway"/>
    <property type="evidence" value="ECO:0007669"/>
    <property type="project" value="TreeGrafter"/>
</dbReference>
<dbReference type="GO" id="GO:0016114">
    <property type="term" value="P:terpenoid biosynthetic process"/>
    <property type="evidence" value="ECO:0007669"/>
    <property type="project" value="UniProtKB-UniRule"/>
</dbReference>
<dbReference type="GO" id="GO:0009228">
    <property type="term" value="P:thiamine biosynthetic process"/>
    <property type="evidence" value="ECO:0007669"/>
    <property type="project" value="UniProtKB-UniRule"/>
</dbReference>
<dbReference type="CDD" id="cd02007">
    <property type="entry name" value="TPP_DXS"/>
    <property type="match status" value="1"/>
</dbReference>
<dbReference type="CDD" id="cd07033">
    <property type="entry name" value="TPP_PYR_DXS_TK_like"/>
    <property type="match status" value="1"/>
</dbReference>
<dbReference type="FunFam" id="3.40.50.920:FF:000002">
    <property type="entry name" value="1-deoxy-D-xylulose-5-phosphate synthase"/>
    <property type="match status" value="1"/>
</dbReference>
<dbReference type="FunFam" id="3.40.50.970:FF:000005">
    <property type="entry name" value="1-deoxy-D-xylulose-5-phosphate synthase"/>
    <property type="match status" value="1"/>
</dbReference>
<dbReference type="Gene3D" id="3.40.50.920">
    <property type="match status" value="1"/>
</dbReference>
<dbReference type="Gene3D" id="3.40.50.970">
    <property type="match status" value="2"/>
</dbReference>
<dbReference type="HAMAP" id="MF_00315">
    <property type="entry name" value="DXP_synth"/>
    <property type="match status" value="1"/>
</dbReference>
<dbReference type="InterPro" id="IPR005477">
    <property type="entry name" value="Dxylulose-5-P_synthase"/>
</dbReference>
<dbReference type="InterPro" id="IPR029061">
    <property type="entry name" value="THDP-binding"/>
</dbReference>
<dbReference type="InterPro" id="IPR009014">
    <property type="entry name" value="Transketo_C/PFOR_II"/>
</dbReference>
<dbReference type="InterPro" id="IPR005475">
    <property type="entry name" value="Transketolase-like_Pyr-bd"/>
</dbReference>
<dbReference type="InterPro" id="IPR020826">
    <property type="entry name" value="Transketolase_BS"/>
</dbReference>
<dbReference type="InterPro" id="IPR033248">
    <property type="entry name" value="Transketolase_C"/>
</dbReference>
<dbReference type="InterPro" id="IPR049557">
    <property type="entry name" value="Transketolase_CS"/>
</dbReference>
<dbReference type="NCBIfam" id="TIGR00204">
    <property type="entry name" value="dxs"/>
    <property type="match status" value="1"/>
</dbReference>
<dbReference type="NCBIfam" id="NF003933">
    <property type="entry name" value="PRK05444.2-2"/>
    <property type="match status" value="1"/>
</dbReference>
<dbReference type="PANTHER" id="PTHR43322">
    <property type="entry name" value="1-D-DEOXYXYLULOSE 5-PHOSPHATE SYNTHASE-RELATED"/>
    <property type="match status" value="1"/>
</dbReference>
<dbReference type="PANTHER" id="PTHR43322:SF5">
    <property type="entry name" value="1-DEOXY-D-XYLULOSE-5-PHOSPHATE SYNTHASE, CHLOROPLASTIC"/>
    <property type="match status" value="1"/>
</dbReference>
<dbReference type="Pfam" id="PF13292">
    <property type="entry name" value="DXP_synthase_N"/>
    <property type="match status" value="1"/>
</dbReference>
<dbReference type="Pfam" id="PF02779">
    <property type="entry name" value="Transket_pyr"/>
    <property type="match status" value="1"/>
</dbReference>
<dbReference type="Pfam" id="PF02780">
    <property type="entry name" value="Transketolase_C"/>
    <property type="match status" value="1"/>
</dbReference>
<dbReference type="SMART" id="SM00861">
    <property type="entry name" value="Transket_pyr"/>
    <property type="match status" value="1"/>
</dbReference>
<dbReference type="SUPFAM" id="SSF52518">
    <property type="entry name" value="Thiamin diphosphate-binding fold (THDP-binding)"/>
    <property type="match status" value="2"/>
</dbReference>
<dbReference type="SUPFAM" id="SSF52922">
    <property type="entry name" value="TK C-terminal domain-like"/>
    <property type="match status" value="1"/>
</dbReference>
<dbReference type="PROSITE" id="PS00801">
    <property type="entry name" value="TRANSKETOLASE_1"/>
    <property type="match status" value="1"/>
</dbReference>
<dbReference type="PROSITE" id="PS00802">
    <property type="entry name" value="TRANSKETOLASE_2"/>
    <property type="match status" value="1"/>
</dbReference>